<name>RNC_LACAC</name>
<proteinExistence type="inferred from homology"/>
<accession>Q5FJJ7</accession>
<reference key="1">
    <citation type="journal article" date="2005" name="Proc. Natl. Acad. Sci. U.S.A.">
        <title>Complete genome sequence of the probiotic lactic acid bacterium Lactobacillus acidophilus NCFM.</title>
        <authorList>
            <person name="Altermann E."/>
            <person name="Russell W.M."/>
            <person name="Azcarate-Peril M.A."/>
            <person name="Barrangou R."/>
            <person name="Buck B.L."/>
            <person name="McAuliffe O."/>
            <person name="Souther N."/>
            <person name="Dobson A."/>
            <person name="Duong T."/>
            <person name="Callanan M."/>
            <person name="Lick S."/>
            <person name="Hamrick A."/>
            <person name="Cano R."/>
            <person name="Klaenhammer T.R."/>
        </authorList>
    </citation>
    <scope>NUCLEOTIDE SEQUENCE [LARGE SCALE GENOMIC DNA]</scope>
    <source>
        <strain>ATCC 700396 / NCK56 / N2 / NCFM</strain>
    </source>
</reference>
<gene>
    <name evidence="1" type="primary">rnc</name>
    <name type="ordered locus">LBA1297</name>
</gene>
<protein>
    <recommendedName>
        <fullName evidence="1">Ribonuclease 3</fullName>
        <ecNumber evidence="1">3.1.26.3</ecNumber>
    </recommendedName>
    <alternativeName>
        <fullName evidence="1">Ribonuclease III</fullName>
        <shortName evidence="1">RNase III</shortName>
    </alternativeName>
</protein>
<sequence length="228" mass="26096">MVSTKFLNKLKNEYNIEFNNEKLLEEAFTHSSYSNEHPDDGIRDYEKLEFLGDAVLELAVSNYLYRHYPKLNEGELTRLRSNIVRTEGFSEFAIECGFQKEIHLGNGEEKAGARNRKTLLEDVFEAFNGALFLDQGMPAVERFLHLTVYPLIAKGEFDDSRDYKTDLQELLQQNGPVNIEYSVISESQLPSHFVVELKINDQVQTQGEGHNKKAAEQQAAKAALQKFE</sequence>
<feature type="chain" id="PRO_0000228539" description="Ribonuclease 3">
    <location>
        <begin position="1"/>
        <end position="228"/>
    </location>
</feature>
<feature type="domain" description="RNase III" evidence="1">
    <location>
        <begin position="7"/>
        <end position="136"/>
    </location>
</feature>
<feature type="domain" description="DRBM" evidence="1">
    <location>
        <begin position="162"/>
        <end position="228"/>
    </location>
</feature>
<feature type="region of interest" description="Disordered" evidence="2">
    <location>
        <begin position="207"/>
        <end position="228"/>
    </location>
</feature>
<feature type="compositionally biased region" description="Low complexity" evidence="2">
    <location>
        <begin position="216"/>
        <end position="228"/>
    </location>
</feature>
<feature type="active site" evidence="1">
    <location>
        <position position="53"/>
    </location>
</feature>
<feature type="active site" evidence="1">
    <location>
        <position position="125"/>
    </location>
</feature>
<feature type="binding site" evidence="1">
    <location>
        <position position="49"/>
    </location>
    <ligand>
        <name>Mg(2+)</name>
        <dbReference type="ChEBI" id="CHEBI:18420"/>
    </ligand>
</feature>
<feature type="binding site" evidence="1">
    <location>
        <position position="122"/>
    </location>
    <ligand>
        <name>Mg(2+)</name>
        <dbReference type="ChEBI" id="CHEBI:18420"/>
    </ligand>
</feature>
<feature type="binding site" evidence="1">
    <location>
        <position position="125"/>
    </location>
    <ligand>
        <name>Mg(2+)</name>
        <dbReference type="ChEBI" id="CHEBI:18420"/>
    </ligand>
</feature>
<comment type="function">
    <text evidence="1">Digests double-stranded RNA. Involved in the processing of primary rRNA transcript to yield the immediate precursors to the large and small rRNAs (23S and 16S). Processes some mRNAs, and tRNAs when they are encoded in the rRNA operon. Processes pre-crRNA and tracrRNA of type II CRISPR loci if present in the organism.</text>
</comment>
<comment type="catalytic activity">
    <reaction evidence="1">
        <text>Endonucleolytic cleavage to 5'-phosphomonoester.</text>
        <dbReference type="EC" id="3.1.26.3"/>
    </reaction>
</comment>
<comment type="cofactor">
    <cofactor evidence="1">
        <name>Mg(2+)</name>
        <dbReference type="ChEBI" id="CHEBI:18420"/>
    </cofactor>
</comment>
<comment type="subunit">
    <text evidence="1">Homodimer.</text>
</comment>
<comment type="subcellular location">
    <subcellularLocation>
        <location evidence="1">Cytoplasm</location>
    </subcellularLocation>
</comment>
<comment type="similarity">
    <text evidence="1">Belongs to the ribonuclease III family.</text>
</comment>
<keyword id="KW-0963">Cytoplasm</keyword>
<keyword id="KW-0255">Endonuclease</keyword>
<keyword id="KW-0378">Hydrolase</keyword>
<keyword id="KW-0460">Magnesium</keyword>
<keyword id="KW-0479">Metal-binding</keyword>
<keyword id="KW-0507">mRNA processing</keyword>
<keyword id="KW-0540">Nuclease</keyword>
<keyword id="KW-1185">Reference proteome</keyword>
<keyword id="KW-0694">RNA-binding</keyword>
<keyword id="KW-0698">rRNA processing</keyword>
<keyword id="KW-0699">rRNA-binding</keyword>
<keyword id="KW-0819">tRNA processing</keyword>
<organism>
    <name type="scientific">Lactobacillus acidophilus (strain ATCC 700396 / NCK56 / N2 / NCFM)</name>
    <dbReference type="NCBI Taxonomy" id="272621"/>
    <lineage>
        <taxon>Bacteria</taxon>
        <taxon>Bacillati</taxon>
        <taxon>Bacillota</taxon>
        <taxon>Bacilli</taxon>
        <taxon>Lactobacillales</taxon>
        <taxon>Lactobacillaceae</taxon>
        <taxon>Lactobacillus</taxon>
    </lineage>
</organism>
<evidence type="ECO:0000255" key="1">
    <source>
        <dbReference type="HAMAP-Rule" id="MF_00104"/>
    </source>
</evidence>
<evidence type="ECO:0000256" key="2">
    <source>
        <dbReference type="SAM" id="MobiDB-lite"/>
    </source>
</evidence>
<dbReference type="EC" id="3.1.26.3" evidence="1"/>
<dbReference type="EMBL" id="CP000033">
    <property type="protein sequence ID" value="AAV43127.1"/>
    <property type="molecule type" value="Genomic_DNA"/>
</dbReference>
<dbReference type="RefSeq" id="WP_003547887.1">
    <property type="nucleotide sequence ID" value="NC_006814.3"/>
</dbReference>
<dbReference type="RefSeq" id="YP_194158.1">
    <property type="nucleotide sequence ID" value="NC_006814.3"/>
</dbReference>
<dbReference type="SMR" id="Q5FJJ7"/>
<dbReference type="STRING" id="272621.LBA1297"/>
<dbReference type="GeneID" id="93289616"/>
<dbReference type="KEGG" id="lac:LBA1297"/>
<dbReference type="PATRIC" id="fig|272621.13.peg.1229"/>
<dbReference type="eggNOG" id="COG0571">
    <property type="taxonomic scope" value="Bacteria"/>
</dbReference>
<dbReference type="HOGENOM" id="CLU_000907_1_3_9"/>
<dbReference type="OrthoDB" id="9805026at2"/>
<dbReference type="BioCyc" id="LACI272621:G1G49-1277-MONOMER"/>
<dbReference type="Proteomes" id="UP000006381">
    <property type="component" value="Chromosome"/>
</dbReference>
<dbReference type="GO" id="GO:0005737">
    <property type="term" value="C:cytoplasm"/>
    <property type="evidence" value="ECO:0007669"/>
    <property type="project" value="UniProtKB-SubCell"/>
</dbReference>
<dbReference type="GO" id="GO:0003725">
    <property type="term" value="F:double-stranded RNA binding"/>
    <property type="evidence" value="ECO:0007669"/>
    <property type="project" value="TreeGrafter"/>
</dbReference>
<dbReference type="GO" id="GO:0046872">
    <property type="term" value="F:metal ion binding"/>
    <property type="evidence" value="ECO:0007669"/>
    <property type="project" value="UniProtKB-KW"/>
</dbReference>
<dbReference type="GO" id="GO:0004525">
    <property type="term" value="F:ribonuclease III activity"/>
    <property type="evidence" value="ECO:0007669"/>
    <property type="project" value="UniProtKB-UniRule"/>
</dbReference>
<dbReference type="GO" id="GO:0019843">
    <property type="term" value="F:rRNA binding"/>
    <property type="evidence" value="ECO:0007669"/>
    <property type="project" value="UniProtKB-KW"/>
</dbReference>
<dbReference type="GO" id="GO:0006397">
    <property type="term" value="P:mRNA processing"/>
    <property type="evidence" value="ECO:0007669"/>
    <property type="project" value="UniProtKB-UniRule"/>
</dbReference>
<dbReference type="GO" id="GO:0010468">
    <property type="term" value="P:regulation of gene expression"/>
    <property type="evidence" value="ECO:0007669"/>
    <property type="project" value="TreeGrafter"/>
</dbReference>
<dbReference type="GO" id="GO:0006364">
    <property type="term" value="P:rRNA processing"/>
    <property type="evidence" value="ECO:0007669"/>
    <property type="project" value="UniProtKB-UniRule"/>
</dbReference>
<dbReference type="GO" id="GO:0008033">
    <property type="term" value="P:tRNA processing"/>
    <property type="evidence" value="ECO:0007669"/>
    <property type="project" value="UniProtKB-KW"/>
</dbReference>
<dbReference type="CDD" id="cd00593">
    <property type="entry name" value="RIBOc"/>
    <property type="match status" value="1"/>
</dbReference>
<dbReference type="FunFam" id="1.10.1520.10:FF:000001">
    <property type="entry name" value="Ribonuclease 3"/>
    <property type="match status" value="1"/>
</dbReference>
<dbReference type="Gene3D" id="3.30.160.20">
    <property type="match status" value="1"/>
</dbReference>
<dbReference type="Gene3D" id="1.10.1520.10">
    <property type="entry name" value="Ribonuclease III domain"/>
    <property type="match status" value="1"/>
</dbReference>
<dbReference type="HAMAP" id="MF_00104">
    <property type="entry name" value="RNase_III"/>
    <property type="match status" value="1"/>
</dbReference>
<dbReference type="InterPro" id="IPR014720">
    <property type="entry name" value="dsRBD_dom"/>
</dbReference>
<dbReference type="InterPro" id="IPR011907">
    <property type="entry name" value="RNase_III"/>
</dbReference>
<dbReference type="InterPro" id="IPR000999">
    <property type="entry name" value="RNase_III_dom"/>
</dbReference>
<dbReference type="InterPro" id="IPR036389">
    <property type="entry name" value="RNase_III_sf"/>
</dbReference>
<dbReference type="NCBIfam" id="TIGR02191">
    <property type="entry name" value="RNaseIII"/>
    <property type="match status" value="1"/>
</dbReference>
<dbReference type="PANTHER" id="PTHR11207:SF0">
    <property type="entry name" value="RIBONUCLEASE 3"/>
    <property type="match status" value="1"/>
</dbReference>
<dbReference type="PANTHER" id="PTHR11207">
    <property type="entry name" value="RIBONUCLEASE III"/>
    <property type="match status" value="1"/>
</dbReference>
<dbReference type="Pfam" id="PF00035">
    <property type="entry name" value="dsrm"/>
    <property type="match status" value="1"/>
</dbReference>
<dbReference type="Pfam" id="PF14622">
    <property type="entry name" value="Ribonucleas_3_3"/>
    <property type="match status" value="1"/>
</dbReference>
<dbReference type="SMART" id="SM00358">
    <property type="entry name" value="DSRM"/>
    <property type="match status" value="1"/>
</dbReference>
<dbReference type="SMART" id="SM00535">
    <property type="entry name" value="RIBOc"/>
    <property type="match status" value="1"/>
</dbReference>
<dbReference type="SUPFAM" id="SSF54768">
    <property type="entry name" value="dsRNA-binding domain-like"/>
    <property type="match status" value="1"/>
</dbReference>
<dbReference type="SUPFAM" id="SSF69065">
    <property type="entry name" value="RNase III domain-like"/>
    <property type="match status" value="1"/>
</dbReference>
<dbReference type="PROSITE" id="PS50137">
    <property type="entry name" value="DS_RBD"/>
    <property type="match status" value="1"/>
</dbReference>
<dbReference type="PROSITE" id="PS00517">
    <property type="entry name" value="RNASE_3_1"/>
    <property type="match status" value="1"/>
</dbReference>
<dbReference type="PROSITE" id="PS50142">
    <property type="entry name" value="RNASE_3_2"/>
    <property type="match status" value="1"/>
</dbReference>